<organism>
    <name type="scientific">Thraustochytrium sp. (strain ATCC 26185 / S-3)</name>
    <dbReference type="NCBI Taxonomy" id="672127"/>
    <lineage>
        <taxon>Eukaryota</taxon>
        <taxon>Sar</taxon>
        <taxon>Stramenopiles</taxon>
        <taxon>Bigyra</taxon>
        <taxon>Labyrinthulomycetes</taxon>
        <taxon>Thraustochytrida</taxon>
        <taxon>Thraustochytriaceae</taxon>
        <taxon>Thraustochytrium</taxon>
    </lineage>
</organism>
<sequence>MRGGAGAAEAPAAAGAATAAEAEAPPAAVEAWALRVAGWAPHDATRARLEAGLQQEERERVRKFRFEIDRHRALAGRVLIRTMVAEALRVDPAEIELKRTEMGKPFVARPDPGTFSFNLSHHGDWVVLMGHPSRAVGVDIMKYEQPKGTQSLEEFFTTMRNSFTPDEWGRIRLGATGNAVGAPHLRRFYKYWSLKEAYLKAIGIGIGFGLQRASFTLDEESGIAMLDLDGARDTQFTFRLSQLDDEHCVSVAVEHHAADGDAAPRIAWRRLAGIEVKDEEGVVLVDSK</sequence>
<gene>
    <name evidence="5" type="primary">PPTase</name>
</gene>
<reference key="1">
    <citation type="journal article" date="2016" name="J. Lipid Res.">
        <title>Biosynthetic mechanism of very long chain polyunsaturated fatty acids in Thraustochytrium sp. 26185.</title>
        <authorList>
            <person name="Meesapyodsuk D."/>
            <person name="Qiu X."/>
        </authorList>
    </citation>
    <scope>NUCLEOTIDE SEQUENCE [GENOMIC DNA]</scope>
    <source>
        <strain>ATCC 26185 / S-3</strain>
    </source>
</reference>
<reference key="2">
    <citation type="journal article" date="2017" name="J. Clin. Lipidol.">
        <title>Use of supplemental long-chain omega-3 fatty acids and risk for cardiac death: An updated meta-analysis and review of research gaps.</title>
        <authorList>
            <person name="Maki K.C."/>
            <person name="Palacios O.M."/>
            <person name="Bell M."/>
            <person name="Toth P.P."/>
        </authorList>
    </citation>
    <scope>BIOTECHNOLOGY</scope>
</reference>
<reference key="3">
    <citation type="journal article" date="2018" name="Nutr. Neurosci.">
        <title>Omega-3 fatty acids' supplementation in Alzheimer's disease: A systematic review.</title>
        <authorList>
            <person name="Canhada S."/>
            <person name="Castro K."/>
            <person name="Perry I.S."/>
            <person name="Luft V.C."/>
        </authorList>
    </citation>
    <scope>BIOTECHNOLOGY</scope>
</reference>
<protein>
    <recommendedName>
        <fullName evidence="5">Phosphopantetheinyl transferase</fullName>
        <shortName evidence="5">PPTase</shortName>
        <ecNumber evidence="2">2.7.8.7</ecNumber>
    </recommendedName>
</protein>
<dbReference type="EC" id="2.7.8.7" evidence="2"/>
<dbReference type="EMBL" id="KX651615">
    <property type="protein sequence ID" value="AOG21007.1"/>
    <property type="molecule type" value="Genomic_DNA"/>
</dbReference>
<dbReference type="SMR" id="A0A1B3PEJ0"/>
<dbReference type="UniPathway" id="UPA00094"/>
<dbReference type="GO" id="GO:0005829">
    <property type="term" value="C:cytosol"/>
    <property type="evidence" value="ECO:0007669"/>
    <property type="project" value="UniProtKB-SubCell"/>
</dbReference>
<dbReference type="GO" id="GO:0008897">
    <property type="term" value="F:holo-[acyl-carrier-protein] synthase activity"/>
    <property type="evidence" value="ECO:0007669"/>
    <property type="project" value="InterPro"/>
</dbReference>
<dbReference type="GO" id="GO:0000287">
    <property type="term" value="F:magnesium ion binding"/>
    <property type="evidence" value="ECO:0007669"/>
    <property type="project" value="InterPro"/>
</dbReference>
<dbReference type="GO" id="GO:0006633">
    <property type="term" value="P:fatty acid biosynthetic process"/>
    <property type="evidence" value="ECO:0007669"/>
    <property type="project" value="UniProtKB-UniPathway"/>
</dbReference>
<dbReference type="GO" id="GO:0019878">
    <property type="term" value="P:lysine biosynthetic process via aminoadipic acid"/>
    <property type="evidence" value="ECO:0007669"/>
    <property type="project" value="TreeGrafter"/>
</dbReference>
<dbReference type="FunFam" id="3.90.470.20:FF:000003">
    <property type="entry name" value="L-aminoadipate-semialdehyde dehydrogenase-phosphopantetheinyl transferase"/>
    <property type="match status" value="1"/>
</dbReference>
<dbReference type="Gene3D" id="3.90.470.20">
    <property type="entry name" value="4'-phosphopantetheinyl transferase domain"/>
    <property type="match status" value="2"/>
</dbReference>
<dbReference type="InterPro" id="IPR008278">
    <property type="entry name" value="4-PPantetheinyl_Trfase_dom"/>
</dbReference>
<dbReference type="InterPro" id="IPR037143">
    <property type="entry name" value="4-PPantetheinyl_Trfase_dom_sf"/>
</dbReference>
<dbReference type="InterPro" id="IPR055066">
    <property type="entry name" value="AASDHPPT_N"/>
</dbReference>
<dbReference type="InterPro" id="IPR050559">
    <property type="entry name" value="P-Pant_transferase_sf"/>
</dbReference>
<dbReference type="PANTHER" id="PTHR12215:SF10">
    <property type="entry name" value="L-AMINOADIPATE-SEMIALDEHYDE DEHYDROGENASE-PHOSPHOPANTETHEINYL TRANSFERASE"/>
    <property type="match status" value="1"/>
</dbReference>
<dbReference type="PANTHER" id="PTHR12215">
    <property type="entry name" value="PHOSPHOPANTETHEINE TRANSFERASE"/>
    <property type="match status" value="1"/>
</dbReference>
<dbReference type="Pfam" id="PF22624">
    <property type="entry name" value="AASDHPPT_N"/>
    <property type="match status" value="1"/>
</dbReference>
<dbReference type="Pfam" id="PF01648">
    <property type="entry name" value="ACPS"/>
    <property type="match status" value="1"/>
</dbReference>
<dbReference type="SUPFAM" id="SSF56214">
    <property type="entry name" value="4'-phosphopantetheinyl transferase"/>
    <property type="match status" value="2"/>
</dbReference>
<comment type="function">
    <text evidence="2">Phosphopantetheinyl transferase that is essential for attaching phosphopantetheine to ACP domains of the polyunsaturated fatty acid (PUFA) synthase converting the inactive apo-synthase to the active holo-synthase.</text>
</comment>
<comment type="catalytic activity">
    <reaction evidence="2">
        <text>apo-[ACP] + CoA = holo-[ACP] + adenosine 3',5'-bisphosphate + H(+)</text>
        <dbReference type="Rhea" id="RHEA:12068"/>
        <dbReference type="Rhea" id="RHEA-COMP:9685"/>
        <dbReference type="Rhea" id="RHEA-COMP:9690"/>
        <dbReference type="ChEBI" id="CHEBI:15378"/>
        <dbReference type="ChEBI" id="CHEBI:29999"/>
        <dbReference type="ChEBI" id="CHEBI:57287"/>
        <dbReference type="ChEBI" id="CHEBI:58343"/>
        <dbReference type="ChEBI" id="CHEBI:64479"/>
        <dbReference type="EC" id="2.7.8.7"/>
    </reaction>
    <physiologicalReaction direction="left-to-right" evidence="2">
        <dbReference type="Rhea" id="RHEA:12069"/>
    </physiologicalReaction>
</comment>
<comment type="pathway">
    <text evidence="2">Lipid metabolism; fatty acid biosynthesis.</text>
</comment>
<comment type="subunit">
    <text evidence="1">Monomer.</text>
</comment>
<comment type="subcellular location">
    <subcellularLocation>
        <location evidence="1">Cytoplasm</location>
        <location evidence="1">Cytosol</location>
    </subcellularLocation>
</comment>
<comment type="biotechnology">
    <text evidence="3 4">Polyunsaturated fatty acids may be beneficial in prevention of cardiovascular disease and treatment of mild Alzheimer's disease.</text>
</comment>
<comment type="similarity">
    <text evidence="6">Belongs to the P-Pant transferase superfamily. AcpS family.</text>
</comment>
<keyword id="KW-0963">Cytoplasm</keyword>
<keyword id="KW-0460">Magnesium</keyword>
<keyword id="KW-0479">Metal-binding</keyword>
<keyword id="KW-0808">Transferase</keyword>
<accession>A0A1B3PEJ0</accession>
<feature type="chain" id="PRO_0000456891" description="Phosphopantetheinyl transferase">
    <location>
        <begin position="1"/>
        <end position="288"/>
    </location>
</feature>
<feature type="binding site" evidence="1">
    <location>
        <position position="60"/>
    </location>
    <ligand>
        <name>CoA</name>
        <dbReference type="ChEBI" id="CHEBI:57287"/>
    </ligand>
</feature>
<feature type="binding site" evidence="1">
    <location>
        <begin position="99"/>
        <end position="104"/>
    </location>
    <ligand>
        <name>CoA</name>
        <dbReference type="ChEBI" id="CHEBI:57287"/>
    </ligand>
</feature>
<feature type="binding site" evidence="1">
    <location>
        <begin position="118"/>
        <end position="121"/>
    </location>
    <ligand>
        <name>CoA</name>
        <dbReference type="ChEBI" id="CHEBI:57287"/>
    </ligand>
</feature>
<feature type="binding site" evidence="1">
    <location>
        <position position="139"/>
    </location>
    <ligand>
        <name>Mg(2+)</name>
        <dbReference type="ChEBI" id="CHEBI:18420"/>
    </ligand>
</feature>
<feature type="binding site" evidence="1">
    <location>
        <begin position="196"/>
        <end position="200"/>
    </location>
    <ligand>
        <name>CoA</name>
        <dbReference type="ChEBI" id="CHEBI:57287"/>
    </ligand>
</feature>
<feature type="binding site" evidence="1">
    <location>
        <position position="196"/>
    </location>
    <ligand>
        <name>Mg(2+)</name>
        <dbReference type="ChEBI" id="CHEBI:18420"/>
    </ligand>
</feature>
<proteinExistence type="evidence at protein level"/>
<name>PPT_THRS2</name>
<evidence type="ECO:0000250" key="1">
    <source>
        <dbReference type="UniProtKB" id="Q9NRN7"/>
    </source>
</evidence>
<evidence type="ECO:0000269" key="2">
    <source>
    </source>
</evidence>
<evidence type="ECO:0000269" key="3">
    <source>
    </source>
</evidence>
<evidence type="ECO:0000269" key="4">
    <source>
    </source>
</evidence>
<evidence type="ECO:0000303" key="5">
    <source>
    </source>
</evidence>
<evidence type="ECO:0000305" key="6"/>